<reference evidence="6" key="1">
    <citation type="journal article" date="2015" name="Nature">
        <title>Ancient proteins resolve the evolutionary history of Darwin's South American ungulates.</title>
        <authorList>
            <person name="Welker F."/>
            <person name="Collins M.J."/>
            <person name="Thomas J.A."/>
            <person name="Wadsley M."/>
            <person name="Brace S."/>
            <person name="Cappellini E."/>
            <person name="Turvey S.T."/>
            <person name="Reguero M."/>
            <person name="Gelfo J.N."/>
            <person name="Kramarz A."/>
            <person name="Burger J."/>
            <person name="Thomas-Oates J."/>
            <person name="Ashford D.A."/>
            <person name="Ashton P.D."/>
            <person name="Rowsell K."/>
            <person name="Porter D.M."/>
            <person name="Kessler B."/>
            <person name="Fischer R."/>
            <person name="Baessmann C."/>
            <person name="Kaspar S."/>
            <person name="Olsen J.V."/>
            <person name="Kiley P."/>
            <person name="Elliott J.A."/>
            <person name="Kelstrup C.D."/>
            <person name="Mullin V."/>
            <person name="Hofreiter M."/>
            <person name="Willerslev E."/>
            <person name="Hublin J.J."/>
            <person name="Orlando L."/>
            <person name="Barnes I."/>
            <person name="MacPhee R.D."/>
        </authorList>
    </citation>
    <scope>PROTEIN SEQUENCE</scope>
    <scope>IDENTIFICATION BY MASS SPECTROMETRY</scope>
    <source>
        <tissue evidence="5">Bone</tissue>
    </source>
</reference>
<feature type="chain" id="PRO_0000433493" description="Collagen alpha-1(I) chain" evidence="4">
    <location>
        <begin position="1"/>
        <end position="895"/>
    </location>
</feature>
<feature type="region of interest" description="Disordered" evidence="3">
    <location>
        <begin position="1"/>
        <end position="895"/>
    </location>
</feature>
<feature type="compositionally biased region" description="Low complexity" evidence="3">
    <location>
        <begin position="20"/>
        <end position="39"/>
    </location>
</feature>
<feature type="compositionally biased region" description="Basic and acidic residues" evidence="3">
    <location>
        <begin position="51"/>
        <end position="65"/>
    </location>
</feature>
<feature type="compositionally biased region" description="Low complexity" evidence="3">
    <location>
        <begin position="98"/>
        <end position="114"/>
    </location>
</feature>
<feature type="compositionally biased region" description="Low complexity" evidence="3">
    <location>
        <begin position="137"/>
        <end position="150"/>
    </location>
</feature>
<feature type="compositionally biased region" description="Pro residues" evidence="3">
    <location>
        <begin position="152"/>
        <end position="164"/>
    </location>
</feature>
<feature type="compositionally biased region" description="Low complexity" evidence="3">
    <location>
        <begin position="198"/>
        <end position="237"/>
    </location>
</feature>
<feature type="compositionally biased region" description="Low complexity" evidence="3">
    <location>
        <begin position="302"/>
        <end position="336"/>
    </location>
</feature>
<feature type="compositionally biased region" description="Low complexity" evidence="3">
    <location>
        <begin position="348"/>
        <end position="374"/>
    </location>
</feature>
<feature type="compositionally biased region" description="Low complexity" evidence="3">
    <location>
        <begin position="383"/>
        <end position="399"/>
    </location>
</feature>
<feature type="compositionally biased region" description="Low complexity" evidence="3">
    <location>
        <begin position="553"/>
        <end position="564"/>
    </location>
</feature>
<feature type="compositionally biased region" description="Low complexity" evidence="3">
    <location>
        <begin position="575"/>
        <end position="593"/>
    </location>
</feature>
<feature type="compositionally biased region" description="Pro residues" evidence="3">
    <location>
        <begin position="595"/>
        <end position="607"/>
    </location>
</feature>
<feature type="compositionally biased region" description="Low complexity" evidence="3">
    <location>
        <begin position="608"/>
        <end position="635"/>
    </location>
</feature>
<feature type="compositionally biased region" description="Low complexity" evidence="3">
    <location>
        <begin position="660"/>
        <end position="669"/>
    </location>
</feature>
<feature type="compositionally biased region" description="Low complexity" evidence="3">
    <location>
        <begin position="679"/>
        <end position="703"/>
    </location>
</feature>
<feature type="compositionally biased region" description="Pro residues" evidence="3">
    <location>
        <begin position="741"/>
        <end position="751"/>
    </location>
</feature>
<feature type="compositionally biased region" description="Low complexity" evidence="3">
    <location>
        <begin position="753"/>
        <end position="768"/>
    </location>
</feature>
<feature type="compositionally biased region" description="Pro residues" evidence="3">
    <location>
        <begin position="787"/>
        <end position="802"/>
    </location>
</feature>
<feature type="compositionally biased region" description="Low complexity" evidence="3">
    <location>
        <begin position="823"/>
        <end position="838"/>
    </location>
</feature>
<feature type="compositionally biased region" description="Low complexity" evidence="3">
    <location>
        <begin position="853"/>
        <end position="886"/>
    </location>
</feature>
<feature type="modified residue" description="Phosphoserine" evidence="2">
    <location>
        <position position="90"/>
    </location>
</feature>
<feature type="modified residue" description="Phosphoserine" evidence="2">
    <location>
        <position position="556"/>
    </location>
</feature>
<feature type="unsure residue" description="I or L" evidence="4">
    <location>
        <position position="11"/>
    </location>
</feature>
<feature type="unsure residue" description="I or L" evidence="4">
    <location>
        <position position="77"/>
    </location>
</feature>
<feature type="unsure residue" description="I or L" evidence="4">
    <location>
        <position position="83"/>
    </location>
</feature>
<feature type="unsure residue" description="I or L" evidence="4">
    <location>
        <position position="92"/>
    </location>
</feature>
<feature type="unsure residue" description="I or L" evidence="4">
    <location>
        <position position="125"/>
    </location>
</feature>
<feature type="unsure residue" description="I or L" evidence="4">
    <location>
        <position position="224"/>
    </location>
</feature>
<feature type="unsure residue" description="I or L" evidence="4">
    <location>
        <position position="275"/>
    </location>
</feature>
<feature type="unsure residue" description="I or L" evidence="4">
    <location>
        <position position="294"/>
    </location>
</feature>
<feature type="unsure residue" description="I or L" evidence="4">
    <location>
        <position position="296"/>
    </location>
</feature>
<feature type="unsure residue" description="I or L" evidence="4">
    <location>
        <position position="344"/>
    </location>
</feature>
<feature type="unsure residue" description="I or L" evidence="4">
    <location>
        <position position="350"/>
    </location>
</feature>
<feature type="unsure residue" description="I or L" evidence="4">
    <location>
        <position position="451"/>
    </location>
</feature>
<feature type="unsure residue" description="I or L" evidence="4">
    <location>
        <position position="473"/>
    </location>
</feature>
<feature type="unsure residue" description="I or L" evidence="4">
    <location>
        <position position="507"/>
    </location>
</feature>
<feature type="unsure residue" description="I or L" evidence="4">
    <location>
        <position position="519"/>
    </location>
</feature>
<feature type="unsure residue" description="I or L" evidence="4">
    <location>
        <position position="534"/>
    </location>
</feature>
<feature type="unsure residue" description="I or L" evidence="4">
    <location>
        <position position="538"/>
    </location>
</feature>
<feature type="unsure residue" description="I or L" evidence="4">
    <location>
        <position position="608"/>
    </location>
</feature>
<feature type="unsure residue" description="I or L" evidence="4">
    <location>
        <position position="702"/>
    </location>
</feature>
<feature type="unsure residue" description="I or L" evidence="4">
    <location>
        <position position="711"/>
    </location>
</feature>
<feature type="unsure residue" description="I or L" evidence="4">
    <location>
        <position position="720"/>
    </location>
</feature>
<feature type="unsure residue" description="I or L" evidence="4">
    <location>
        <position position="750"/>
    </location>
</feature>
<feature type="unsure residue" description="I or L" evidence="4">
    <location>
        <position position="823"/>
    </location>
</feature>
<feature type="unsure residue" description="I or L" evidence="4">
    <location>
        <position position="843"/>
    </location>
</feature>
<feature type="unsure residue" description="I or L" evidence="4">
    <location>
        <position position="882"/>
    </location>
</feature>
<feature type="unsure residue" description="I or L" evidence="4">
    <location>
        <position position="885"/>
    </location>
</feature>
<feature type="unsure residue" description="I or L" evidence="4">
    <location>
        <position position="889"/>
    </location>
</feature>
<feature type="non-consecutive residues" evidence="5">
    <location>
        <begin position="87"/>
        <end position="88"/>
    </location>
</feature>
<feature type="non-consecutive residues" evidence="5">
    <location>
        <begin position="288"/>
        <end position="289"/>
    </location>
</feature>
<feature type="non-consecutive residues" evidence="5">
    <location>
        <begin position="303"/>
        <end position="304"/>
    </location>
</feature>
<feature type="non-consecutive residues" evidence="5">
    <location>
        <begin position="404"/>
        <end position="405"/>
    </location>
</feature>
<feature type="non-consecutive residues" evidence="5">
    <location>
        <begin position="482"/>
        <end position="483"/>
    </location>
</feature>
<feature type="non-consecutive residues" evidence="5">
    <location>
        <begin position="500"/>
        <end position="501"/>
    </location>
</feature>
<feature type="non-consecutive residues" evidence="5">
    <location>
        <begin position="532"/>
        <end position="533"/>
    </location>
</feature>
<feature type="non-consecutive residues" evidence="5">
    <location>
        <begin position="565"/>
        <end position="566"/>
    </location>
</feature>
<feature type="non-consecutive residues" evidence="5">
    <location>
        <begin position="590"/>
        <end position="591"/>
    </location>
</feature>
<feature type="non-consecutive residues" evidence="5">
    <location>
        <begin position="617"/>
        <end position="618"/>
    </location>
</feature>
<feature type="non-consecutive residues" evidence="5">
    <location>
        <begin position="655"/>
        <end position="656"/>
    </location>
</feature>
<feature type="non-consecutive residues" evidence="5">
    <location>
        <begin position="715"/>
        <end position="716"/>
    </location>
</feature>
<feature type="non-consecutive residues" evidence="5">
    <location>
        <begin position="838"/>
        <end position="839"/>
    </location>
</feature>
<proteinExistence type="evidence at protein level"/>
<sequence>GPMGPSGPRGIPGPPGAPGPQGFQGPPGEPGEPGASGPMGPRGPPGPPGKNGDDGEAGKPGRPGERGPPGPQGARGIPGTAGIPGMKGFSGIDGAKGDAGPAGPKGEPGSPGENGAPGQMGPRGIPGERGRPGAPGPAGARGNDGATGAAGPPGPTGPAGPPGFPGAVGAKGEAGPQGARGSEGPQGVRGEPGPPGPAGAAGPAGNPGADGQPGAKGANGAPGIAGAPGFPGARGPSGPQGPSGPPGPKGNSGEPGAPGNKGDTGAKGEPGPTGIQGPPGPAGEEGKRGEPGPIGIPGPPGERGFPGADGVAGPKGPAGERGAPGPAGPKGSPGEAGRPGEAGIPGAKGITGSPGSPGPDGKTGPPGPAGQDGRPGPPGPPGARGQAGVMGFPGPKGAAGEPGKGVPGPPGAVGPAGKDGEAGAQGPPGPAGPAGERGEQGPAGSPGFQGIPGPAGPPGESGKPGEQGVPGDIGAPGPSGARGFPGERGVQGPPGPAGPRSQGAPGIQGMPGERGAAGIPGPKGDRGDAGPKGITGPIGPPGPAGAPGDKGETGPSGPAGPTGARRGEPGPPGPAGFAGPPGADGQPGAKGDAGPPGPAGPAGPPGPIGSVGAPGPKGSAGPPGATGFPGAAGRVGPPGPSGNAGPPGPPGPVGKGPRGETGPAGRPGEAGPPGPPGPAGEKGSPGADGPAGAPGTPGPQGIAGQRGVVGIPGQRGFPGIPGPSGEPGKQGPSGASGERGPPGPVGPPGIAGPPGESGREGSPGAEGSAGRDGSPGPKGDRGETGPAGPPGAPGAPGAPGPVGPAGKSGDRGEAGPAGPAGPIGPVGARGPAGPQGPRGFSGIQGPPGPPGSPGEQGPSGASGPAGPRGPPGSAGAPGKDGINGIPGPIGPPGPR</sequence>
<name>CO1A1_EQUSP</name>
<dbReference type="GO" id="GO:0005581">
    <property type="term" value="C:collagen trimer"/>
    <property type="evidence" value="ECO:0007669"/>
    <property type="project" value="UniProtKB-KW"/>
</dbReference>
<dbReference type="GO" id="GO:0031012">
    <property type="term" value="C:extracellular matrix"/>
    <property type="evidence" value="ECO:0007669"/>
    <property type="project" value="TreeGrafter"/>
</dbReference>
<dbReference type="GO" id="GO:0005615">
    <property type="term" value="C:extracellular space"/>
    <property type="evidence" value="ECO:0007669"/>
    <property type="project" value="TreeGrafter"/>
</dbReference>
<dbReference type="GO" id="GO:0030020">
    <property type="term" value="F:extracellular matrix structural constituent conferring tensile strength"/>
    <property type="evidence" value="ECO:0007669"/>
    <property type="project" value="TreeGrafter"/>
</dbReference>
<dbReference type="GO" id="GO:0030198">
    <property type="term" value="P:extracellular matrix organization"/>
    <property type="evidence" value="ECO:0007669"/>
    <property type="project" value="TreeGrafter"/>
</dbReference>
<dbReference type="InterPro" id="IPR008160">
    <property type="entry name" value="Collagen"/>
</dbReference>
<dbReference type="InterPro" id="IPR050149">
    <property type="entry name" value="Collagen_superfamily"/>
</dbReference>
<dbReference type="PANTHER" id="PTHR24023">
    <property type="entry name" value="COLLAGEN ALPHA"/>
    <property type="match status" value="1"/>
</dbReference>
<dbReference type="PANTHER" id="PTHR24023:SF1082">
    <property type="entry name" value="COLLAGEN TRIPLE HELIX REPEAT"/>
    <property type="match status" value="1"/>
</dbReference>
<dbReference type="Pfam" id="PF01391">
    <property type="entry name" value="Collagen"/>
    <property type="match status" value="9"/>
</dbReference>
<organism evidence="5">
    <name type="scientific">Equus sp</name>
    <dbReference type="NCBI Taxonomy" id="46122"/>
    <lineage>
        <taxon>Eukaryota</taxon>
        <taxon>Metazoa</taxon>
        <taxon>Chordata</taxon>
        <taxon>Craniata</taxon>
        <taxon>Vertebrata</taxon>
        <taxon>Euteleostomi</taxon>
        <taxon>Mammalia</taxon>
        <taxon>Eutheria</taxon>
        <taxon>Laurasiatheria</taxon>
        <taxon>Perissodactyla</taxon>
        <taxon>Equidae</taxon>
        <taxon>Equus</taxon>
    </lineage>
</organism>
<evidence type="ECO:0000250" key="1">
    <source>
        <dbReference type="UniProtKB" id="P02452"/>
    </source>
</evidence>
<evidence type="ECO:0000250" key="2">
    <source>
        <dbReference type="UniProtKB" id="P02454"/>
    </source>
</evidence>
<evidence type="ECO:0000256" key="3">
    <source>
        <dbReference type="SAM" id="MobiDB-lite"/>
    </source>
</evidence>
<evidence type="ECO:0000269" key="4">
    <source>
    </source>
</evidence>
<evidence type="ECO:0000303" key="5">
    <source>
    </source>
</evidence>
<evidence type="ECO:0000305" key="6"/>
<evidence type="ECO:0000305" key="7">
    <source>
    </source>
</evidence>
<keyword id="KW-0106">Calcium</keyword>
<keyword id="KW-0176">Collagen</keyword>
<keyword id="KW-0903">Direct protein sequencing</keyword>
<keyword id="KW-0272">Extracellular matrix</keyword>
<keyword id="KW-0379">Hydroxylation</keyword>
<keyword id="KW-0597">Phosphoprotein</keyword>
<keyword id="KW-0677">Repeat</keyword>
<keyword id="KW-0964">Secreted</keyword>
<accession>C0HJN9</accession>
<gene>
    <name evidence="1" type="primary">COL1A1</name>
</gene>
<comment type="function">
    <text evidence="6">Type I collagen is a member of group I collagen (fibrillar forming collagen).</text>
</comment>
<comment type="subunit">
    <text evidence="6">Trimers of one alpha 2(I) and two alpha 1(I) chains.</text>
</comment>
<comment type="subcellular location">
    <subcellularLocation>
        <location>Secreted</location>
    </subcellularLocation>
    <subcellularLocation>
        <location>Secreted</location>
        <location>Extracellular space</location>
    </subcellularLocation>
    <subcellularLocation>
        <location evidence="6">Secreted</location>
        <location evidence="6">Extracellular space</location>
        <location evidence="6">Extracellular matrix</location>
    </subcellularLocation>
</comment>
<comment type="tissue specificity">
    <text evidence="6">Forms the fibrils of tendon, ligaments and bones. In bones, the fibrils are mineralized with calcium hydroxyapatite.</text>
</comment>
<comment type="PTM">
    <text evidence="6">Prolines at the third position of the tripeptide repeating unit (G-X-Y) are hydroxylated in some or all of the chains.</text>
</comment>
<comment type="miscellaneous">
    <text evidence="7">These protein fragments were extracted from fossils. The tryptic peptides required multiple purification steps in order to eliminate contaminants and to increase the concentration of peptidic material.</text>
</comment>
<comment type="similarity">
    <text evidence="6">Belongs to the fibrillar collagen family.</text>
</comment>
<protein>
    <recommendedName>
        <fullName evidence="5">Collagen alpha-1(I) chain</fullName>
    </recommendedName>
    <alternativeName>
        <fullName evidence="1">Alpha-1 type I collagen</fullName>
    </alternativeName>
</protein>